<dbReference type="EC" id="3.6.5.3" evidence="2"/>
<dbReference type="EMBL" id="CP000736">
    <property type="protein sequence ID" value="ABR51443.1"/>
    <property type="molecule type" value="Genomic_DNA"/>
</dbReference>
<dbReference type="SMR" id="A6TZ25"/>
<dbReference type="KEGG" id="sah:SaurJH1_0585"/>
<dbReference type="HOGENOM" id="CLU_007265_0_0_9"/>
<dbReference type="GO" id="GO:0005829">
    <property type="term" value="C:cytosol"/>
    <property type="evidence" value="ECO:0007669"/>
    <property type="project" value="TreeGrafter"/>
</dbReference>
<dbReference type="GO" id="GO:0005525">
    <property type="term" value="F:GTP binding"/>
    <property type="evidence" value="ECO:0007669"/>
    <property type="project" value="UniProtKB-UniRule"/>
</dbReference>
<dbReference type="GO" id="GO:0003924">
    <property type="term" value="F:GTPase activity"/>
    <property type="evidence" value="ECO:0007669"/>
    <property type="project" value="InterPro"/>
</dbReference>
<dbReference type="GO" id="GO:0003746">
    <property type="term" value="F:translation elongation factor activity"/>
    <property type="evidence" value="ECO:0007669"/>
    <property type="project" value="UniProtKB-UniRule"/>
</dbReference>
<dbReference type="CDD" id="cd01884">
    <property type="entry name" value="EF_Tu"/>
    <property type="match status" value="1"/>
</dbReference>
<dbReference type="CDD" id="cd03697">
    <property type="entry name" value="EFTU_II"/>
    <property type="match status" value="1"/>
</dbReference>
<dbReference type="CDD" id="cd03707">
    <property type="entry name" value="EFTU_III"/>
    <property type="match status" value="1"/>
</dbReference>
<dbReference type="FunFam" id="2.40.30.10:FF:000001">
    <property type="entry name" value="Elongation factor Tu"/>
    <property type="match status" value="1"/>
</dbReference>
<dbReference type="FunFam" id="3.40.50.300:FF:000003">
    <property type="entry name" value="Elongation factor Tu"/>
    <property type="match status" value="1"/>
</dbReference>
<dbReference type="Gene3D" id="3.40.50.300">
    <property type="entry name" value="P-loop containing nucleotide triphosphate hydrolases"/>
    <property type="match status" value="1"/>
</dbReference>
<dbReference type="Gene3D" id="2.40.30.10">
    <property type="entry name" value="Translation factors"/>
    <property type="match status" value="2"/>
</dbReference>
<dbReference type="HAMAP" id="MF_00118_B">
    <property type="entry name" value="EF_Tu_B"/>
    <property type="match status" value="1"/>
</dbReference>
<dbReference type="InterPro" id="IPR041709">
    <property type="entry name" value="EF-Tu_GTP-bd"/>
</dbReference>
<dbReference type="InterPro" id="IPR050055">
    <property type="entry name" value="EF-Tu_GTPase"/>
</dbReference>
<dbReference type="InterPro" id="IPR004161">
    <property type="entry name" value="EFTu-like_2"/>
</dbReference>
<dbReference type="InterPro" id="IPR033720">
    <property type="entry name" value="EFTU_2"/>
</dbReference>
<dbReference type="InterPro" id="IPR031157">
    <property type="entry name" value="G_TR_CS"/>
</dbReference>
<dbReference type="InterPro" id="IPR027417">
    <property type="entry name" value="P-loop_NTPase"/>
</dbReference>
<dbReference type="InterPro" id="IPR005225">
    <property type="entry name" value="Small_GTP-bd"/>
</dbReference>
<dbReference type="InterPro" id="IPR000795">
    <property type="entry name" value="T_Tr_GTP-bd_dom"/>
</dbReference>
<dbReference type="InterPro" id="IPR009000">
    <property type="entry name" value="Transl_B-barrel_sf"/>
</dbReference>
<dbReference type="InterPro" id="IPR009001">
    <property type="entry name" value="Transl_elong_EF1A/Init_IF2_C"/>
</dbReference>
<dbReference type="InterPro" id="IPR004541">
    <property type="entry name" value="Transl_elong_EFTu/EF1A_bac/org"/>
</dbReference>
<dbReference type="InterPro" id="IPR004160">
    <property type="entry name" value="Transl_elong_EFTu/EF1A_C"/>
</dbReference>
<dbReference type="NCBIfam" id="TIGR00485">
    <property type="entry name" value="EF-Tu"/>
    <property type="match status" value="1"/>
</dbReference>
<dbReference type="NCBIfam" id="NF000766">
    <property type="entry name" value="PRK00049.1"/>
    <property type="match status" value="1"/>
</dbReference>
<dbReference type="NCBIfam" id="NF009372">
    <property type="entry name" value="PRK12735.1"/>
    <property type="match status" value="1"/>
</dbReference>
<dbReference type="NCBIfam" id="NF009373">
    <property type="entry name" value="PRK12736.1"/>
    <property type="match status" value="1"/>
</dbReference>
<dbReference type="NCBIfam" id="TIGR00231">
    <property type="entry name" value="small_GTP"/>
    <property type="match status" value="1"/>
</dbReference>
<dbReference type="PANTHER" id="PTHR43721:SF22">
    <property type="entry name" value="ELONGATION FACTOR TU, MITOCHONDRIAL"/>
    <property type="match status" value="1"/>
</dbReference>
<dbReference type="PANTHER" id="PTHR43721">
    <property type="entry name" value="ELONGATION FACTOR TU-RELATED"/>
    <property type="match status" value="1"/>
</dbReference>
<dbReference type="Pfam" id="PF00009">
    <property type="entry name" value="GTP_EFTU"/>
    <property type="match status" value="1"/>
</dbReference>
<dbReference type="Pfam" id="PF03144">
    <property type="entry name" value="GTP_EFTU_D2"/>
    <property type="match status" value="1"/>
</dbReference>
<dbReference type="Pfam" id="PF03143">
    <property type="entry name" value="GTP_EFTU_D3"/>
    <property type="match status" value="1"/>
</dbReference>
<dbReference type="PRINTS" id="PR00315">
    <property type="entry name" value="ELONGATNFCT"/>
</dbReference>
<dbReference type="SUPFAM" id="SSF50465">
    <property type="entry name" value="EF-Tu/eEF-1alpha/eIF2-gamma C-terminal domain"/>
    <property type="match status" value="1"/>
</dbReference>
<dbReference type="SUPFAM" id="SSF52540">
    <property type="entry name" value="P-loop containing nucleoside triphosphate hydrolases"/>
    <property type="match status" value="1"/>
</dbReference>
<dbReference type="SUPFAM" id="SSF50447">
    <property type="entry name" value="Translation proteins"/>
    <property type="match status" value="1"/>
</dbReference>
<dbReference type="PROSITE" id="PS00301">
    <property type="entry name" value="G_TR_1"/>
    <property type="match status" value="1"/>
</dbReference>
<dbReference type="PROSITE" id="PS51722">
    <property type="entry name" value="G_TR_2"/>
    <property type="match status" value="1"/>
</dbReference>
<sequence>MAKEKFDRSKEHANIGTIGHVDHGKTTLTAAIATVLAKNGDSVAQSYDMIDNAPEEKERGITINTSHIEYQTDKRHYAHVDCPGHADYVKNMITGAAQMDGGILVVSAADGPMPQTREHILLSRNVGVPALVVFLNKVDMVDDEELLELVEMEVRDLLSEYDFPGDDVPVIAGSALKALEGDAQYEEKILELMEAVDTYIPTPERDSDKPFMMPVEDVFSITGRGTVATGRVERGQIKVGEEVEIIGLHDTSKTTVTGVEMFRKLLDYAEAGDNIGALLRGVAREDVQRGQVLAAPGSITPHTEFKAEVYVLSKDEGGRHTPFFSNYRPQFYFRTTDVTGVVHLPEGTEMVMPGDNVEMTVELIAPIAIEDGTRFSIREGGRTVGSGVVTEIIK</sequence>
<proteinExistence type="inferred from homology"/>
<protein>
    <recommendedName>
        <fullName evidence="2">Elongation factor Tu</fullName>
        <shortName evidence="2">EF-Tu</shortName>
        <ecNumber evidence="2">3.6.5.3</ecNumber>
    </recommendedName>
</protein>
<feature type="chain" id="PRO_1000076112" description="Elongation factor Tu">
    <location>
        <begin position="1"/>
        <end position="394"/>
    </location>
</feature>
<feature type="domain" description="tr-type G">
    <location>
        <begin position="10"/>
        <end position="204"/>
    </location>
</feature>
<feature type="region of interest" description="G1" evidence="1">
    <location>
        <begin position="19"/>
        <end position="26"/>
    </location>
</feature>
<feature type="region of interest" description="G2" evidence="1">
    <location>
        <begin position="60"/>
        <end position="64"/>
    </location>
</feature>
<feature type="region of interest" description="G3" evidence="1">
    <location>
        <begin position="81"/>
        <end position="84"/>
    </location>
</feature>
<feature type="region of interest" description="G4" evidence="1">
    <location>
        <begin position="136"/>
        <end position="139"/>
    </location>
</feature>
<feature type="region of interest" description="G5" evidence="1">
    <location>
        <begin position="174"/>
        <end position="176"/>
    </location>
</feature>
<feature type="binding site" evidence="2">
    <location>
        <begin position="19"/>
        <end position="26"/>
    </location>
    <ligand>
        <name>GTP</name>
        <dbReference type="ChEBI" id="CHEBI:37565"/>
    </ligand>
</feature>
<feature type="binding site" evidence="2">
    <location>
        <position position="26"/>
    </location>
    <ligand>
        <name>Mg(2+)</name>
        <dbReference type="ChEBI" id="CHEBI:18420"/>
    </ligand>
</feature>
<feature type="binding site" evidence="2">
    <location>
        <begin position="81"/>
        <end position="85"/>
    </location>
    <ligand>
        <name>GTP</name>
        <dbReference type="ChEBI" id="CHEBI:37565"/>
    </ligand>
</feature>
<feature type="binding site" evidence="2">
    <location>
        <begin position="136"/>
        <end position="139"/>
    </location>
    <ligand>
        <name>GTP</name>
        <dbReference type="ChEBI" id="CHEBI:37565"/>
    </ligand>
</feature>
<keyword id="KW-0963">Cytoplasm</keyword>
<keyword id="KW-0251">Elongation factor</keyword>
<keyword id="KW-0342">GTP-binding</keyword>
<keyword id="KW-0378">Hydrolase</keyword>
<keyword id="KW-0460">Magnesium</keyword>
<keyword id="KW-0479">Metal-binding</keyword>
<keyword id="KW-0547">Nucleotide-binding</keyword>
<keyword id="KW-0648">Protein biosynthesis</keyword>
<comment type="function">
    <text evidence="2">GTP hydrolase that promotes the GTP-dependent binding of aminoacyl-tRNA to the A-site of ribosomes during protein biosynthesis.</text>
</comment>
<comment type="catalytic activity">
    <reaction evidence="2">
        <text>GTP + H2O = GDP + phosphate + H(+)</text>
        <dbReference type="Rhea" id="RHEA:19669"/>
        <dbReference type="ChEBI" id="CHEBI:15377"/>
        <dbReference type="ChEBI" id="CHEBI:15378"/>
        <dbReference type="ChEBI" id="CHEBI:37565"/>
        <dbReference type="ChEBI" id="CHEBI:43474"/>
        <dbReference type="ChEBI" id="CHEBI:58189"/>
        <dbReference type="EC" id="3.6.5.3"/>
    </reaction>
    <physiologicalReaction direction="left-to-right" evidence="2">
        <dbReference type="Rhea" id="RHEA:19670"/>
    </physiologicalReaction>
</comment>
<comment type="subunit">
    <text evidence="2">Monomer.</text>
</comment>
<comment type="subcellular location">
    <subcellularLocation>
        <location evidence="2">Cytoplasm</location>
    </subcellularLocation>
</comment>
<comment type="similarity">
    <text evidence="2">Belongs to the TRAFAC class translation factor GTPase superfamily. Classic translation factor GTPase family. EF-Tu/EF-1A subfamily.</text>
</comment>
<organism>
    <name type="scientific">Staphylococcus aureus (strain JH1)</name>
    <dbReference type="NCBI Taxonomy" id="359787"/>
    <lineage>
        <taxon>Bacteria</taxon>
        <taxon>Bacillati</taxon>
        <taxon>Bacillota</taxon>
        <taxon>Bacilli</taxon>
        <taxon>Bacillales</taxon>
        <taxon>Staphylococcaceae</taxon>
        <taxon>Staphylococcus</taxon>
    </lineage>
</organism>
<gene>
    <name evidence="2" type="primary">tuf</name>
    <name type="ordered locus">SaurJH1_0585</name>
</gene>
<accession>A6TZ25</accession>
<name>EFTU_STAA2</name>
<reference key="1">
    <citation type="submission" date="2007-06" db="EMBL/GenBank/DDBJ databases">
        <title>Complete sequence of chromosome of Staphylococcus aureus subsp. aureus JH1.</title>
        <authorList>
            <consortium name="US DOE Joint Genome Institute"/>
            <person name="Copeland A."/>
            <person name="Lucas S."/>
            <person name="Lapidus A."/>
            <person name="Barry K."/>
            <person name="Detter J.C."/>
            <person name="Glavina del Rio T."/>
            <person name="Hammon N."/>
            <person name="Israni S."/>
            <person name="Dalin E."/>
            <person name="Tice H."/>
            <person name="Pitluck S."/>
            <person name="Chain P."/>
            <person name="Malfatti S."/>
            <person name="Shin M."/>
            <person name="Vergez L."/>
            <person name="Schmutz J."/>
            <person name="Larimer F."/>
            <person name="Land M."/>
            <person name="Hauser L."/>
            <person name="Kyrpides N."/>
            <person name="Ivanova N."/>
            <person name="Tomasz A."/>
            <person name="Richardson P."/>
        </authorList>
    </citation>
    <scope>NUCLEOTIDE SEQUENCE [LARGE SCALE GENOMIC DNA]</scope>
    <source>
        <strain>JH1</strain>
    </source>
</reference>
<evidence type="ECO:0000250" key="1"/>
<evidence type="ECO:0000255" key="2">
    <source>
        <dbReference type="HAMAP-Rule" id="MF_00118"/>
    </source>
</evidence>